<reference key="1">
    <citation type="journal article" date="2009" name="PLoS Genet.">
        <title>Organised genome dynamics in the Escherichia coli species results in highly diverse adaptive paths.</title>
        <authorList>
            <person name="Touchon M."/>
            <person name="Hoede C."/>
            <person name="Tenaillon O."/>
            <person name="Barbe V."/>
            <person name="Baeriswyl S."/>
            <person name="Bidet P."/>
            <person name="Bingen E."/>
            <person name="Bonacorsi S."/>
            <person name="Bouchier C."/>
            <person name="Bouvet O."/>
            <person name="Calteau A."/>
            <person name="Chiapello H."/>
            <person name="Clermont O."/>
            <person name="Cruveiller S."/>
            <person name="Danchin A."/>
            <person name="Diard M."/>
            <person name="Dossat C."/>
            <person name="Karoui M.E."/>
            <person name="Frapy E."/>
            <person name="Garry L."/>
            <person name="Ghigo J.M."/>
            <person name="Gilles A.M."/>
            <person name="Johnson J."/>
            <person name="Le Bouguenec C."/>
            <person name="Lescat M."/>
            <person name="Mangenot S."/>
            <person name="Martinez-Jehanne V."/>
            <person name="Matic I."/>
            <person name="Nassif X."/>
            <person name="Oztas S."/>
            <person name="Petit M.A."/>
            <person name="Pichon C."/>
            <person name="Rouy Z."/>
            <person name="Ruf C.S."/>
            <person name="Schneider D."/>
            <person name="Tourret J."/>
            <person name="Vacherie B."/>
            <person name="Vallenet D."/>
            <person name="Medigue C."/>
            <person name="Rocha E.P.C."/>
            <person name="Denamur E."/>
        </authorList>
    </citation>
    <scope>NUCLEOTIDE SEQUENCE [LARGE SCALE GENOMIC DNA]</scope>
    <source>
        <strain>ED1a</strain>
    </source>
</reference>
<proteinExistence type="inferred from homology"/>
<keyword id="KW-0997">Cell inner membrane</keyword>
<keyword id="KW-1003">Cell membrane</keyword>
<keyword id="KW-0472">Membrane</keyword>
<keyword id="KW-0769">Symport</keyword>
<keyword id="KW-0812">Transmembrane</keyword>
<keyword id="KW-1133">Transmembrane helix</keyword>
<keyword id="KW-0813">Transport</keyword>
<evidence type="ECO:0000255" key="1">
    <source>
        <dbReference type="HAMAP-Rule" id="MF_01300"/>
    </source>
</evidence>
<comment type="function">
    <text evidence="1">Responsible for the transport of dicarboxylates such as succinate, fumarate, and malate from the periplasm across the membrane.</text>
</comment>
<comment type="subcellular location">
    <subcellularLocation>
        <location evidence="1">Cell inner membrane</location>
        <topology evidence="1">Multi-pass membrane protein</topology>
    </subcellularLocation>
</comment>
<comment type="similarity">
    <text evidence="1">Belongs to the dicarboxylate/amino acid:cation symporter (DAACS) (TC 2.A.23) family.</text>
</comment>
<name>DCTA_ECO81</name>
<feature type="chain" id="PRO_1000165288" description="C4-dicarboxylate transport protein">
    <location>
        <begin position="1"/>
        <end position="428"/>
    </location>
</feature>
<feature type="transmembrane region" description="Helical" evidence="1">
    <location>
        <begin position="8"/>
        <end position="28"/>
    </location>
</feature>
<feature type="transmembrane region" description="Helical" evidence="1">
    <location>
        <begin position="44"/>
        <end position="64"/>
    </location>
</feature>
<feature type="transmembrane region" description="Helical" evidence="1">
    <location>
        <begin position="76"/>
        <end position="96"/>
    </location>
</feature>
<feature type="transmembrane region" description="Helical" evidence="1">
    <location>
        <begin position="142"/>
        <end position="162"/>
    </location>
</feature>
<feature type="transmembrane region" description="Helical" evidence="1">
    <location>
        <begin position="184"/>
        <end position="204"/>
    </location>
</feature>
<feature type="transmembrane region" description="Helical" evidence="1">
    <location>
        <begin position="222"/>
        <end position="242"/>
    </location>
</feature>
<feature type="transmembrane region" description="Helical" evidence="1">
    <location>
        <begin position="326"/>
        <end position="346"/>
    </location>
</feature>
<feature type="transmembrane region" description="Helical" evidence="1">
    <location>
        <begin position="352"/>
        <end position="372"/>
    </location>
</feature>
<accession>B7N1W8</accession>
<organism>
    <name type="scientific">Escherichia coli O81 (strain ED1a)</name>
    <dbReference type="NCBI Taxonomy" id="585397"/>
    <lineage>
        <taxon>Bacteria</taxon>
        <taxon>Pseudomonadati</taxon>
        <taxon>Pseudomonadota</taxon>
        <taxon>Gammaproteobacteria</taxon>
        <taxon>Enterobacterales</taxon>
        <taxon>Enterobacteriaceae</taxon>
        <taxon>Escherichia</taxon>
    </lineage>
</organism>
<protein>
    <recommendedName>
        <fullName evidence="1">C4-dicarboxylate transport protein</fullName>
    </recommendedName>
</protein>
<sequence>MKTSLFKSLYFQVLTAIAIGILLGHFYPEIGEQMKPLGDGFVKLIKMIIAPVIFCTVVTGIAGMESMKAVGRTGAVALLYFEIVSTIALIIGLIIVNVVQPGAGMNVDPATLDAKAVAVYADQAKDQGIVAFIMDVIPASVIGAFASGNILQVLLFAVLFGFALHRLGSKGQLIFNVIESFSQVIFGIINMIMRLAPIGAFGAMAFTIGKYGVGTLVQLGQLIICFYITCILFVVLVLGSIAKATGFSIFKFIRYIREELLIVLGTSSSESALPRMLDKMEKLGCRKSVVGLVIPTGYSFNLDGTSIYLTMAAVFIAQATNSQMDIVHQITLLIVLLLSSKGAAGVTGSGFIVLAATLSAVGHLPVAGLALILGIDRFMSEARALTNLVGNGVATIVVAKWVKELDHKKLDDVLNNRAPDGKTHELSS</sequence>
<gene>
    <name evidence="1" type="primary">dctA</name>
    <name type="ordered locus">ECED1_4206</name>
</gene>
<dbReference type="EMBL" id="CU928162">
    <property type="protein sequence ID" value="CAR10338.2"/>
    <property type="molecule type" value="Genomic_DNA"/>
</dbReference>
<dbReference type="RefSeq" id="WP_000858214.1">
    <property type="nucleotide sequence ID" value="NC_011745.1"/>
</dbReference>
<dbReference type="SMR" id="B7N1W8"/>
<dbReference type="GeneID" id="93778248"/>
<dbReference type="KEGG" id="ecq:ECED1_4206"/>
<dbReference type="HOGENOM" id="CLU_019375_7_0_6"/>
<dbReference type="Proteomes" id="UP000000748">
    <property type="component" value="Chromosome"/>
</dbReference>
<dbReference type="GO" id="GO:0005886">
    <property type="term" value="C:plasma membrane"/>
    <property type="evidence" value="ECO:0007669"/>
    <property type="project" value="UniProtKB-SubCell"/>
</dbReference>
<dbReference type="GO" id="GO:0015138">
    <property type="term" value="F:fumarate transmembrane transporter activity"/>
    <property type="evidence" value="ECO:0007669"/>
    <property type="project" value="TreeGrafter"/>
</dbReference>
<dbReference type="GO" id="GO:0015366">
    <property type="term" value="F:malate:proton symporter activity"/>
    <property type="evidence" value="ECO:0007669"/>
    <property type="project" value="TreeGrafter"/>
</dbReference>
<dbReference type="GO" id="GO:0015141">
    <property type="term" value="F:succinate transmembrane transporter activity"/>
    <property type="evidence" value="ECO:0007669"/>
    <property type="project" value="TreeGrafter"/>
</dbReference>
<dbReference type="GO" id="GO:0070778">
    <property type="term" value="P:L-aspartate transmembrane transport"/>
    <property type="evidence" value="ECO:0007669"/>
    <property type="project" value="TreeGrafter"/>
</dbReference>
<dbReference type="FunFam" id="1.10.3860.10:FF:000001">
    <property type="entry name" value="C4-dicarboxylate transport protein"/>
    <property type="match status" value="1"/>
</dbReference>
<dbReference type="Gene3D" id="1.10.3860.10">
    <property type="entry name" value="Sodium:dicarboxylate symporter"/>
    <property type="match status" value="1"/>
</dbReference>
<dbReference type="HAMAP" id="MF_01300">
    <property type="entry name" value="C4_dicarb_transport"/>
    <property type="match status" value="1"/>
</dbReference>
<dbReference type="InterPro" id="IPR023954">
    <property type="entry name" value="C4_dicarb_transport"/>
</dbReference>
<dbReference type="InterPro" id="IPR001991">
    <property type="entry name" value="Na-dicarboxylate_symporter"/>
</dbReference>
<dbReference type="InterPro" id="IPR018107">
    <property type="entry name" value="Na-dicarboxylate_symporter_CS"/>
</dbReference>
<dbReference type="InterPro" id="IPR036458">
    <property type="entry name" value="Na:dicarbo_symporter_sf"/>
</dbReference>
<dbReference type="NCBIfam" id="NF002461">
    <property type="entry name" value="PRK01663.1"/>
    <property type="match status" value="1"/>
</dbReference>
<dbReference type="NCBIfam" id="NF009587">
    <property type="entry name" value="PRK13027.1"/>
    <property type="match status" value="1"/>
</dbReference>
<dbReference type="PANTHER" id="PTHR42865:SF1">
    <property type="entry name" value="AEROBIC C4-DICARBOXYLATE TRANSPORT PROTEIN"/>
    <property type="match status" value="1"/>
</dbReference>
<dbReference type="PANTHER" id="PTHR42865">
    <property type="entry name" value="PROTON/GLUTAMATE-ASPARTATE SYMPORTER"/>
    <property type="match status" value="1"/>
</dbReference>
<dbReference type="Pfam" id="PF00375">
    <property type="entry name" value="SDF"/>
    <property type="match status" value="1"/>
</dbReference>
<dbReference type="PRINTS" id="PR00173">
    <property type="entry name" value="EDTRNSPORT"/>
</dbReference>
<dbReference type="SUPFAM" id="SSF118215">
    <property type="entry name" value="Proton glutamate symport protein"/>
    <property type="match status" value="1"/>
</dbReference>
<dbReference type="PROSITE" id="PS00713">
    <property type="entry name" value="NA_DICARBOXYL_SYMP_1"/>
    <property type="match status" value="1"/>
</dbReference>
<dbReference type="PROSITE" id="PS00714">
    <property type="entry name" value="NA_DICARBOXYL_SYMP_2"/>
    <property type="match status" value="1"/>
</dbReference>